<comment type="function">
    <text evidence="1 2">General factor that plays a role in the activation of archaeal genes transcribed by RNA polymerase. Binds specifically to the TATA box promoter element which lies close to the position of transcription initiation.</text>
</comment>
<comment type="disruption phenotype">
    <text evidence="2">In vitro depletion studies show decreased transcription. Restoration of transcription requires the TATA-like A box upstream of the promoter.</text>
</comment>
<comment type="miscellaneous">
    <text evidence="5">Probably starts with an ATC start codon.</text>
</comment>
<comment type="similarity">
    <text evidence="1">Belongs to the TBP family.</text>
</comment>
<comment type="sequence caution" evidence="4">
    <conflict type="erroneous initiation">
        <sequence resource="EMBL-CDS" id="QXJ29654"/>
    </conflict>
    <text>Truncated N-terminus.</text>
</comment>
<dbReference type="EMBL" id="U23419">
    <property type="protein sequence ID" value="AAC43403.1"/>
    <property type="molecule type" value="Genomic_DNA"/>
</dbReference>
<dbReference type="EMBL" id="CP077717">
    <property type="protein sequence ID" value="QXJ29654.1"/>
    <property type="status" value="ALT_INIT"/>
    <property type="molecule type" value="Genomic_DNA"/>
</dbReference>
<dbReference type="PIR" id="S55311">
    <property type="entry name" value="S55311"/>
</dbReference>
<dbReference type="SMR" id="Q55031"/>
<dbReference type="KEGG" id="sshi:J5U23_02527"/>
<dbReference type="Proteomes" id="UP000694018">
    <property type="component" value="Chromosome"/>
</dbReference>
<dbReference type="GO" id="GO:0003677">
    <property type="term" value="F:DNA binding"/>
    <property type="evidence" value="ECO:0007669"/>
    <property type="project" value="UniProtKB-KW"/>
</dbReference>
<dbReference type="GO" id="GO:0003700">
    <property type="term" value="F:DNA-binding transcription factor activity"/>
    <property type="evidence" value="ECO:0007669"/>
    <property type="project" value="UniProtKB-UniRule"/>
</dbReference>
<dbReference type="GO" id="GO:0006352">
    <property type="term" value="P:DNA-templated transcription initiation"/>
    <property type="evidence" value="ECO:0007669"/>
    <property type="project" value="InterPro"/>
</dbReference>
<dbReference type="CDD" id="cd04518">
    <property type="entry name" value="TBP_archaea"/>
    <property type="match status" value="1"/>
</dbReference>
<dbReference type="FunFam" id="3.30.310.10:FF:000007">
    <property type="entry name" value="TATA-box-binding protein"/>
    <property type="match status" value="1"/>
</dbReference>
<dbReference type="FunFam" id="3.30.310.10:FF:000010">
    <property type="entry name" value="TATA-box-binding protein"/>
    <property type="match status" value="1"/>
</dbReference>
<dbReference type="Gene3D" id="3.30.310.10">
    <property type="entry name" value="TATA-Binding Protein"/>
    <property type="match status" value="2"/>
</dbReference>
<dbReference type="HAMAP" id="MF_00408">
    <property type="entry name" value="TATA_bind_prot_arch"/>
    <property type="match status" value="1"/>
</dbReference>
<dbReference type="InterPro" id="IPR000814">
    <property type="entry name" value="TBP"/>
</dbReference>
<dbReference type="InterPro" id="IPR033711">
    <property type="entry name" value="TBP_archaea"/>
</dbReference>
<dbReference type="InterPro" id="IPR030491">
    <property type="entry name" value="TBP_CS"/>
</dbReference>
<dbReference type="InterPro" id="IPR012295">
    <property type="entry name" value="TBP_dom_sf"/>
</dbReference>
<dbReference type="NCBIfam" id="NF001592">
    <property type="entry name" value="PRK00394.1-1"/>
    <property type="match status" value="1"/>
</dbReference>
<dbReference type="NCBIfam" id="NF001593">
    <property type="entry name" value="PRK00394.1-2"/>
    <property type="match status" value="1"/>
</dbReference>
<dbReference type="PANTHER" id="PTHR10126">
    <property type="entry name" value="TATA-BOX BINDING PROTEIN"/>
    <property type="match status" value="1"/>
</dbReference>
<dbReference type="Pfam" id="PF00352">
    <property type="entry name" value="TBP"/>
    <property type="match status" value="2"/>
</dbReference>
<dbReference type="PRINTS" id="PR00686">
    <property type="entry name" value="TIFACTORIID"/>
</dbReference>
<dbReference type="SUPFAM" id="SSF55945">
    <property type="entry name" value="TATA-box binding protein-like"/>
    <property type="match status" value="2"/>
</dbReference>
<dbReference type="PROSITE" id="PS00351">
    <property type="entry name" value="TFIID"/>
    <property type="match status" value="2"/>
</dbReference>
<proteinExistence type="inferred from homology"/>
<keyword id="KW-0238">DNA-binding</keyword>
<keyword id="KW-0677">Repeat</keyword>
<keyword id="KW-0804">Transcription</keyword>
<keyword id="KW-0805">Transcription regulation</keyword>
<gene>
    <name evidence="1" type="primary">tbp</name>
    <name evidence="6" type="ORF">J5U23_02527</name>
</gene>
<protein>
    <recommendedName>
        <fullName evidence="1 3">TATA-box-binding protein</fullName>
    </recommendedName>
    <alternativeName>
        <fullName evidence="1">Box A-binding protein</fullName>
        <shortName evidence="1">BAP</shortName>
    </alternativeName>
    <alternativeName>
        <fullName evidence="1">TATA sequence-binding protein</fullName>
        <shortName evidence="1 3">TBP</shortName>
    </alternativeName>
    <alternativeName>
        <fullName evidence="1">TATA-box factor</fullName>
    </alternativeName>
</protein>
<sequence length="198" mass="22341">MSNSAVSYKPIVNIENIVATVTLEQSLDLYAMERSIPNIEYDPDQFPGLIFRLEQPKVTALIFKSGKMVVTGAKSTEELIKAVKRIIKTLKKYGIKIMGKPKIQIQNIVASANLHVNVNLDKAAFLLENNMYEPEQFPGLIFRMDDPRVVLLIFSSGKMVITGAKREDEVSKAVKRIFDKLAELDCVKPIEEEEELEL</sequence>
<accession>Q55031</accession>
<accession>A0A8F5GU60</accession>
<evidence type="ECO:0000255" key="1">
    <source>
        <dbReference type="HAMAP-Rule" id="MF_00408"/>
    </source>
</evidence>
<evidence type="ECO:0000269" key="2">
    <source>
    </source>
</evidence>
<evidence type="ECO:0000303" key="3">
    <source>
    </source>
</evidence>
<evidence type="ECO:0000305" key="4"/>
<evidence type="ECO:0000305" key="5">
    <source>
    </source>
</evidence>
<evidence type="ECO:0000312" key="6">
    <source>
        <dbReference type="EMBL" id="QXJ29654.1"/>
    </source>
</evidence>
<name>TBP_SACSH</name>
<organism>
    <name type="scientific">Saccharolobus shibatae (strain ATCC 51178 / DSM 5389 / JCM 8931 / NBRC 15437 / B12)</name>
    <name type="common">Sulfolobus shibatae</name>
    <dbReference type="NCBI Taxonomy" id="523848"/>
    <lineage>
        <taxon>Archaea</taxon>
        <taxon>Thermoproteota</taxon>
        <taxon>Thermoprotei</taxon>
        <taxon>Sulfolobales</taxon>
        <taxon>Sulfolobaceae</taxon>
        <taxon>Saccharolobus</taxon>
    </lineage>
</organism>
<feature type="chain" id="PRO_0000154025" description="TATA-box-binding protein">
    <location>
        <begin position="1"/>
        <end position="198"/>
    </location>
</feature>
<feature type="repeat" description="1" evidence="1">
    <location>
        <begin position="14"/>
        <end position="90"/>
    </location>
</feature>
<feature type="repeat" description="2" evidence="1">
    <location>
        <begin position="105"/>
        <end position="181"/>
    </location>
</feature>
<reference key="1">
    <citation type="journal article" date="1995" name="Nucleic Acids Res.">
        <title>Cloning and functional analysis of the TATA binding protein from Sulfolobus shibatae.</title>
        <authorList>
            <person name="Qureshi S.A."/>
            <person name="Baumann P.B."/>
            <person name="Rowlands T."/>
            <person name="Khoo B."/>
            <person name="Jackson S.P."/>
        </authorList>
    </citation>
    <scope>NUCLEOTIDE SEQUENCE [GENOMIC DNA]</scope>
    <scope>PROBABLE START CODON</scope>
    <scope>FUNCTION</scope>
    <scope>DISRUPTION PHENOTYPE</scope>
</reference>
<reference evidence="6" key="2">
    <citation type="journal article" date="2021" name="Environ. Microbiol.">
        <title>New insights into the diversity and evolution of the archaeal mobilome from three complete genomes of Saccharolobus shibatae.</title>
        <authorList>
            <person name="Medvedeva S."/>
            <person name="Brandt D."/>
            <person name="Cvirkaite-Krupovic V."/>
            <person name="Liu Y."/>
            <person name="Severinov K."/>
            <person name="Ishino S."/>
            <person name="Ishino Y."/>
            <person name="Prangishvili D."/>
            <person name="Kalinowski J."/>
            <person name="Krupovic M."/>
        </authorList>
    </citation>
    <scope>NUCLEOTIDE SEQUENCE [LARGE SCALE GENOMIC DNA]</scope>
    <source>
        <strain>ATCC 51178 / DSM 5389 / JCM 8931 / NBRC 15437 / B12</strain>
    </source>
</reference>